<gene>
    <name evidence="2" type="primary">trmB</name>
    <name type="ordered locus">MAP_3643c</name>
</gene>
<reference key="1">
    <citation type="journal article" date="2005" name="Proc. Natl. Acad. Sci. U.S.A.">
        <title>The complete genome sequence of Mycobacterium avium subspecies paratuberculosis.</title>
        <authorList>
            <person name="Li L."/>
            <person name="Bannantine J.P."/>
            <person name="Zhang Q."/>
            <person name="Amonsin A."/>
            <person name="May B.J."/>
            <person name="Alt D."/>
            <person name="Banerji N."/>
            <person name="Kanjilal S."/>
            <person name="Kapur V."/>
        </authorList>
    </citation>
    <scope>NUCLEOTIDE SEQUENCE [LARGE SCALE GENOMIC DNA]</scope>
    <source>
        <strain>ATCC BAA-968 / K-10</strain>
    </source>
</reference>
<keyword id="KW-0489">Methyltransferase</keyword>
<keyword id="KW-1185">Reference proteome</keyword>
<keyword id="KW-0949">S-adenosyl-L-methionine</keyword>
<keyword id="KW-0808">Transferase</keyword>
<keyword id="KW-0819">tRNA processing</keyword>
<feature type="chain" id="PRO_0000171357" description="tRNA (guanine-N(7)-)-methyltransferase">
    <location>
        <begin position="1"/>
        <end position="259"/>
    </location>
</feature>
<feature type="region of interest" description="Disordered" evidence="3">
    <location>
        <begin position="1"/>
        <end position="73"/>
    </location>
</feature>
<feature type="active site" evidence="1">
    <location>
        <position position="166"/>
    </location>
</feature>
<feature type="binding site" evidence="2">
    <location>
        <position position="91"/>
    </location>
    <ligand>
        <name>S-adenosyl-L-methionine</name>
        <dbReference type="ChEBI" id="CHEBI:59789"/>
    </ligand>
</feature>
<feature type="binding site" evidence="2">
    <location>
        <position position="116"/>
    </location>
    <ligand>
        <name>S-adenosyl-L-methionine</name>
        <dbReference type="ChEBI" id="CHEBI:59789"/>
    </ligand>
</feature>
<feature type="binding site" evidence="2">
    <location>
        <position position="143"/>
    </location>
    <ligand>
        <name>S-adenosyl-L-methionine</name>
        <dbReference type="ChEBI" id="CHEBI:59789"/>
    </ligand>
</feature>
<feature type="binding site" evidence="2">
    <location>
        <position position="166"/>
    </location>
    <ligand>
        <name>S-adenosyl-L-methionine</name>
        <dbReference type="ChEBI" id="CHEBI:59789"/>
    </ligand>
</feature>
<feature type="binding site" evidence="2">
    <location>
        <position position="170"/>
    </location>
    <ligand>
        <name>substrate</name>
    </ligand>
</feature>
<feature type="binding site" evidence="2">
    <location>
        <position position="202"/>
    </location>
    <ligand>
        <name>substrate</name>
    </ligand>
</feature>
<feature type="binding site" evidence="2">
    <location>
        <begin position="238"/>
        <end position="241"/>
    </location>
    <ligand>
        <name>substrate</name>
    </ligand>
</feature>
<proteinExistence type="inferred from homology"/>
<accession>Q73TS5</accession>
<organism>
    <name type="scientific">Mycolicibacterium paratuberculosis (strain ATCC BAA-968 / K-10)</name>
    <name type="common">Mycobacterium paratuberculosis</name>
    <dbReference type="NCBI Taxonomy" id="262316"/>
    <lineage>
        <taxon>Bacteria</taxon>
        <taxon>Bacillati</taxon>
        <taxon>Actinomycetota</taxon>
        <taxon>Actinomycetes</taxon>
        <taxon>Mycobacteriales</taxon>
        <taxon>Mycobacteriaceae</taxon>
        <taxon>Mycobacterium</taxon>
        <taxon>Mycobacterium avium complex (MAC)</taxon>
    </lineage>
</organism>
<comment type="function">
    <text evidence="2">Catalyzes the formation of N(7)-methylguanine at position 46 (m7G46) in tRNA.</text>
</comment>
<comment type="catalytic activity">
    <reaction evidence="2">
        <text>guanosine(46) in tRNA + S-adenosyl-L-methionine = N(7)-methylguanosine(46) in tRNA + S-adenosyl-L-homocysteine</text>
        <dbReference type="Rhea" id="RHEA:42708"/>
        <dbReference type="Rhea" id="RHEA-COMP:10188"/>
        <dbReference type="Rhea" id="RHEA-COMP:10189"/>
        <dbReference type="ChEBI" id="CHEBI:57856"/>
        <dbReference type="ChEBI" id="CHEBI:59789"/>
        <dbReference type="ChEBI" id="CHEBI:74269"/>
        <dbReference type="ChEBI" id="CHEBI:74480"/>
        <dbReference type="EC" id="2.1.1.33"/>
    </reaction>
</comment>
<comment type="pathway">
    <text evidence="2">tRNA modification; N(7)-methylguanine-tRNA biosynthesis.</text>
</comment>
<comment type="similarity">
    <text evidence="2">Belongs to the class I-like SAM-binding methyltransferase superfamily. TrmB family.</text>
</comment>
<evidence type="ECO:0000250" key="1"/>
<evidence type="ECO:0000255" key="2">
    <source>
        <dbReference type="HAMAP-Rule" id="MF_01057"/>
    </source>
</evidence>
<evidence type="ECO:0000256" key="3">
    <source>
        <dbReference type="SAM" id="MobiDB-lite"/>
    </source>
</evidence>
<sequence length="259" mass="28411">MGHHGQMHAQHGVTMPADSPIGQPDRSEQRYFPATAFRTRRSTLSDAQRQTWDRRWPELGLSVGPAEDPDRPGPPLDTDAWFGRKAPVVLEIGCGNGTSTLAMAKEEPGVDVIAVEVYRRGLAQLLCAIDRDNVTNIRLIRGNALDVLQRLIAPASLTGVRVFFPDPWPKARHHKRRFLQPGTVGLIADRLLPGGVLHVATDHAGYAEHIADVGAGEPRLRPANPDSPLPISVARPTTKYETKAQDAGSAVTEFIWLRR</sequence>
<dbReference type="EC" id="2.1.1.33" evidence="2"/>
<dbReference type="EMBL" id="AE016958">
    <property type="protein sequence ID" value="AAS06193.1"/>
    <property type="molecule type" value="Genomic_DNA"/>
</dbReference>
<dbReference type="SMR" id="Q73TS5"/>
<dbReference type="STRING" id="262316.MAP_3643c"/>
<dbReference type="KEGG" id="mpa:MAP_3643c"/>
<dbReference type="eggNOG" id="COG0220">
    <property type="taxonomic scope" value="Bacteria"/>
</dbReference>
<dbReference type="HOGENOM" id="CLU_050910_0_2_11"/>
<dbReference type="UniPathway" id="UPA00989"/>
<dbReference type="Proteomes" id="UP000000580">
    <property type="component" value="Chromosome"/>
</dbReference>
<dbReference type="GO" id="GO:0043527">
    <property type="term" value="C:tRNA methyltransferase complex"/>
    <property type="evidence" value="ECO:0007669"/>
    <property type="project" value="TreeGrafter"/>
</dbReference>
<dbReference type="GO" id="GO:0008176">
    <property type="term" value="F:tRNA (guanine(46)-N7)-methyltransferase activity"/>
    <property type="evidence" value="ECO:0007669"/>
    <property type="project" value="UniProtKB-UniRule"/>
</dbReference>
<dbReference type="CDD" id="cd02440">
    <property type="entry name" value="AdoMet_MTases"/>
    <property type="match status" value="1"/>
</dbReference>
<dbReference type="Gene3D" id="3.40.50.150">
    <property type="entry name" value="Vaccinia Virus protein VP39"/>
    <property type="match status" value="1"/>
</dbReference>
<dbReference type="HAMAP" id="MF_01057">
    <property type="entry name" value="tRNA_methyltr_TrmB"/>
    <property type="match status" value="1"/>
</dbReference>
<dbReference type="InterPro" id="IPR029063">
    <property type="entry name" value="SAM-dependent_MTases_sf"/>
</dbReference>
<dbReference type="InterPro" id="IPR003358">
    <property type="entry name" value="tRNA_(Gua-N-7)_MeTrfase_Trmb"/>
</dbReference>
<dbReference type="InterPro" id="IPR055361">
    <property type="entry name" value="tRNA_methyltr_TrmB_bact"/>
</dbReference>
<dbReference type="NCBIfam" id="TIGR00091">
    <property type="entry name" value="tRNA (guanosine(46)-N7)-methyltransferase TrmB"/>
    <property type="match status" value="1"/>
</dbReference>
<dbReference type="PANTHER" id="PTHR23417">
    <property type="entry name" value="3-DEOXY-D-MANNO-OCTULOSONIC-ACID TRANSFERASE/TRNA GUANINE-N 7 - -METHYLTRANSFERASE"/>
    <property type="match status" value="1"/>
</dbReference>
<dbReference type="PANTHER" id="PTHR23417:SF14">
    <property type="entry name" value="PENTACOTRIPEPTIDE-REPEAT REGION OF PRORP DOMAIN-CONTAINING PROTEIN"/>
    <property type="match status" value="1"/>
</dbReference>
<dbReference type="Pfam" id="PF02390">
    <property type="entry name" value="Methyltransf_4"/>
    <property type="match status" value="1"/>
</dbReference>
<dbReference type="SUPFAM" id="SSF53335">
    <property type="entry name" value="S-adenosyl-L-methionine-dependent methyltransferases"/>
    <property type="match status" value="1"/>
</dbReference>
<dbReference type="PROSITE" id="PS51625">
    <property type="entry name" value="SAM_MT_TRMB"/>
    <property type="match status" value="1"/>
</dbReference>
<name>TRMB_MYCPA</name>
<protein>
    <recommendedName>
        <fullName evidence="2">tRNA (guanine-N(7)-)-methyltransferase</fullName>
        <ecNumber evidence="2">2.1.1.33</ecNumber>
    </recommendedName>
    <alternativeName>
        <fullName evidence="2">tRNA (guanine(46)-N(7))-methyltransferase</fullName>
    </alternativeName>
    <alternativeName>
        <fullName evidence="2">tRNA(m7G46)-methyltransferase</fullName>
    </alternativeName>
</protein>